<organism>
    <name type="scientific">Arabidopsis thaliana</name>
    <name type="common">Mouse-ear cress</name>
    <dbReference type="NCBI Taxonomy" id="3702"/>
    <lineage>
        <taxon>Eukaryota</taxon>
        <taxon>Viridiplantae</taxon>
        <taxon>Streptophyta</taxon>
        <taxon>Embryophyta</taxon>
        <taxon>Tracheophyta</taxon>
        <taxon>Spermatophyta</taxon>
        <taxon>Magnoliopsida</taxon>
        <taxon>eudicotyledons</taxon>
        <taxon>Gunneridae</taxon>
        <taxon>Pentapetalae</taxon>
        <taxon>rosids</taxon>
        <taxon>malvids</taxon>
        <taxon>Brassicales</taxon>
        <taxon>Brassicaceae</taxon>
        <taxon>Camelineae</taxon>
        <taxon>Arabidopsis</taxon>
    </lineage>
</organism>
<dbReference type="EMBL" id="AL078637">
    <property type="protein sequence ID" value="CAB45074.1"/>
    <property type="status" value="ALT_INIT"/>
    <property type="molecule type" value="Genomic_DNA"/>
</dbReference>
<dbReference type="EMBL" id="AL161561">
    <property type="protein sequence ID" value="CAB79349.1"/>
    <property type="status" value="ALT_INIT"/>
    <property type="molecule type" value="Genomic_DNA"/>
</dbReference>
<dbReference type="EMBL" id="CP002687">
    <property type="protein sequence ID" value="AEE84897.1"/>
    <property type="molecule type" value="Genomic_DNA"/>
</dbReference>
<dbReference type="EMBL" id="CP002687">
    <property type="protein sequence ID" value="AEE84898.1"/>
    <property type="molecule type" value="Genomic_DNA"/>
</dbReference>
<dbReference type="EMBL" id="AY091772">
    <property type="protein sequence ID" value="AAM10320.1"/>
    <property type="molecule type" value="mRNA"/>
</dbReference>
<dbReference type="EMBL" id="BT006340">
    <property type="protein sequence ID" value="AAP21148.1"/>
    <property type="molecule type" value="mRNA"/>
</dbReference>
<dbReference type="EMBL" id="AK316873">
    <property type="protein sequence ID" value="BAH19581.1"/>
    <property type="molecule type" value="mRNA"/>
</dbReference>
<dbReference type="PIR" id="T09902">
    <property type="entry name" value="T09902"/>
</dbReference>
<dbReference type="SMR" id="Q8RWQ8"/>
<dbReference type="BioGRID" id="13830">
    <property type="interactions" value="12"/>
</dbReference>
<dbReference type="FunCoup" id="Q8RWQ8">
    <property type="interactions" value="192"/>
</dbReference>
<dbReference type="IntAct" id="Q8RWQ8">
    <property type="interactions" value="14"/>
</dbReference>
<dbReference type="STRING" id="3702.Q8RWQ8"/>
<dbReference type="PaxDb" id="3702-AT4G24390.1"/>
<dbReference type="ProteomicsDB" id="230506"/>
<dbReference type="EnsemblPlants" id="AT4G24390.1">
    <property type="protein sequence ID" value="AT4G24390.1"/>
    <property type="gene ID" value="AT4G24390"/>
</dbReference>
<dbReference type="EnsemblPlants" id="AT4G24390.2">
    <property type="protein sequence ID" value="AT4G24390.2"/>
    <property type="gene ID" value="AT4G24390"/>
</dbReference>
<dbReference type="GeneID" id="828541"/>
<dbReference type="Gramene" id="AT4G24390.1">
    <property type="protein sequence ID" value="AT4G24390.1"/>
    <property type="gene ID" value="AT4G24390"/>
</dbReference>
<dbReference type="Gramene" id="AT4G24390.2">
    <property type="protein sequence ID" value="AT4G24390.2"/>
    <property type="gene ID" value="AT4G24390"/>
</dbReference>
<dbReference type="KEGG" id="ath:AT4G24390"/>
<dbReference type="Araport" id="AT4G24390"/>
<dbReference type="TAIR" id="AT4G24390">
    <property type="gene designation" value="AFB4"/>
</dbReference>
<dbReference type="eggNOG" id="KOG1947">
    <property type="taxonomic scope" value="Eukaryota"/>
</dbReference>
<dbReference type="HOGENOM" id="CLU_022456_1_0_1"/>
<dbReference type="InParanoid" id="Q8RWQ8"/>
<dbReference type="OMA" id="PQIMIKR"/>
<dbReference type="PhylomeDB" id="Q8RWQ8"/>
<dbReference type="UniPathway" id="UPA00143"/>
<dbReference type="PRO" id="PR:Q8RWQ8"/>
<dbReference type="Proteomes" id="UP000006548">
    <property type="component" value="Chromosome 4"/>
</dbReference>
<dbReference type="ExpressionAtlas" id="Q8RWQ8">
    <property type="expression patterns" value="baseline and differential"/>
</dbReference>
<dbReference type="GO" id="GO:0005634">
    <property type="term" value="C:nucleus"/>
    <property type="evidence" value="ECO:0007669"/>
    <property type="project" value="UniProtKB-SubCell"/>
</dbReference>
<dbReference type="GO" id="GO:0019005">
    <property type="term" value="C:SCF ubiquitin ligase complex"/>
    <property type="evidence" value="ECO:0000250"/>
    <property type="project" value="UniProtKB"/>
</dbReference>
<dbReference type="GO" id="GO:0010011">
    <property type="term" value="F:auxin binding"/>
    <property type="evidence" value="ECO:0000250"/>
    <property type="project" value="UniProtKB"/>
</dbReference>
<dbReference type="GO" id="GO:0000822">
    <property type="term" value="F:inositol hexakisphosphate binding"/>
    <property type="evidence" value="ECO:0000250"/>
    <property type="project" value="UniProtKB"/>
</dbReference>
<dbReference type="GO" id="GO:0009734">
    <property type="term" value="P:auxin-activated signaling pathway"/>
    <property type="evidence" value="ECO:0000250"/>
    <property type="project" value="UniProtKB"/>
</dbReference>
<dbReference type="GO" id="GO:0016567">
    <property type="term" value="P:protein ubiquitination"/>
    <property type="evidence" value="ECO:0007669"/>
    <property type="project" value="UniProtKB-UniPathway"/>
</dbReference>
<dbReference type="CDD" id="cd22159">
    <property type="entry name" value="F-box_AtTIR1-like"/>
    <property type="match status" value="1"/>
</dbReference>
<dbReference type="FunFam" id="3.80.10.10:FF:000029">
    <property type="entry name" value="Transport inhibitor response 1"/>
    <property type="match status" value="1"/>
</dbReference>
<dbReference type="FunFam" id="1.20.1280.50:FF:000028">
    <property type="entry name" value="Transport inhibitor response 1-like protein"/>
    <property type="match status" value="1"/>
</dbReference>
<dbReference type="Gene3D" id="1.20.1280.50">
    <property type="match status" value="1"/>
</dbReference>
<dbReference type="Gene3D" id="3.80.10.10">
    <property type="entry name" value="Ribonuclease Inhibitor"/>
    <property type="match status" value="1"/>
</dbReference>
<dbReference type="InterPro" id="IPR041567">
    <property type="entry name" value="COI1_F-box"/>
</dbReference>
<dbReference type="InterPro" id="IPR006553">
    <property type="entry name" value="Leu-rich_rpt_Cys-con_subtyp"/>
</dbReference>
<dbReference type="InterPro" id="IPR032675">
    <property type="entry name" value="LRR_dom_sf"/>
</dbReference>
<dbReference type="InterPro" id="IPR041101">
    <property type="entry name" value="Transp_inhibit"/>
</dbReference>
<dbReference type="PANTHER" id="PTHR16134:SF125">
    <property type="entry name" value="F-BOX PROTEIN FBX14"/>
    <property type="match status" value="1"/>
</dbReference>
<dbReference type="PANTHER" id="PTHR16134">
    <property type="entry name" value="F-BOX/TPR REPEAT PROTEIN POF3"/>
    <property type="match status" value="1"/>
</dbReference>
<dbReference type="Pfam" id="PF18511">
    <property type="entry name" value="F-box_5"/>
    <property type="match status" value="1"/>
</dbReference>
<dbReference type="Pfam" id="PF18791">
    <property type="entry name" value="Transp_inhibit"/>
    <property type="match status" value="1"/>
</dbReference>
<dbReference type="SMART" id="SM00367">
    <property type="entry name" value="LRR_CC"/>
    <property type="match status" value="4"/>
</dbReference>
<dbReference type="SUPFAM" id="SSF52047">
    <property type="entry name" value="RNI-like"/>
    <property type="match status" value="1"/>
</dbReference>
<comment type="pathway">
    <text>Protein modification; protein ubiquitination.</text>
</comment>
<comment type="subunit">
    <text evidence="1">Part of a SCF (SKP1-cullin-F-box) protein ligase complex. May interact with auxin and auxin-responsive proteins (By similarity).</text>
</comment>
<comment type="interaction">
    <interactant intactId="EBI-1235922">
        <id>Q8RWQ8</id>
    </interactant>
    <interactant intactId="EBI-4424796">
        <id>Q94BX2</id>
        <label>At3g50910</label>
    </interactant>
    <organismsDiffer>false</organismsDiffer>
    <experiments>3</experiments>
</comment>
<comment type="interaction">
    <interactant intactId="EBI-1235922">
        <id>Q8RWQ8</id>
    </interactant>
    <interactant intactId="EBI-532357">
        <id>Q39255</id>
        <label>SKP1A</label>
    </interactant>
    <organismsDiffer>false</organismsDiffer>
    <experiments>3</experiments>
</comment>
<comment type="interaction">
    <interactant intactId="EBI-1235922">
        <id>Q8RWQ8</id>
    </interactant>
    <interactant intactId="EBI-4424563">
        <id>Q93Z00</id>
        <label>TCP14</label>
    </interactant>
    <organismsDiffer>false</organismsDiffer>
    <experiments>3</experiments>
</comment>
<comment type="interaction">
    <interactant intactId="EBI-1235922">
        <id>Q8RWQ8</id>
    </interactant>
    <interactant intactId="EBI-4426144">
        <id>Q9C9L2</id>
        <label>TCP15</label>
    </interactant>
    <organismsDiffer>false</organismsDiffer>
    <experiments>3</experiments>
</comment>
<comment type="interaction">
    <interactant intactId="EBI-1235922">
        <id>Q8RWQ8</id>
    </interactant>
    <interactant intactId="EBI-15192297">
        <id>Q9LQF0</id>
        <label>TCP23</label>
    </interactant>
    <organismsDiffer>false</organismsDiffer>
    <experiments>3</experiments>
</comment>
<comment type="subcellular location">
    <subcellularLocation>
        <location evidence="1">Nucleus</location>
    </subcellularLocation>
</comment>
<comment type="domain">
    <text evidence="1">The F-box is necessary for the interaction with SKP1.</text>
</comment>
<comment type="miscellaneous">
    <text evidence="1">The myo-inositol hexakisphosphate acts as a structural cofactor.</text>
</comment>
<comment type="sequence caution" evidence="3">
    <conflict type="erroneous initiation">
        <sequence resource="EMBL-CDS" id="CAB45074"/>
    </conflict>
</comment>
<comment type="sequence caution" evidence="3">
    <conflict type="erroneous initiation">
        <sequence resource="EMBL-CDS" id="CAB79349"/>
    </conflict>
</comment>
<proteinExistence type="evidence at protein level"/>
<accession>Q8RWQ8</accession>
<accession>B9DFR4</accession>
<accession>Q9STV5</accession>
<evidence type="ECO:0000250" key="1"/>
<evidence type="ECO:0000256" key="2">
    <source>
        <dbReference type="SAM" id="MobiDB-lite"/>
    </source>
</evidence>
<evidence type="ECO:0000305" key="3"/>
<protein>
    <recommendedName>
        <fullName>F-box protein FBX14</fullName>
    </recommendedName>
    <alternativeName>
        <fullName>Transport inhibitor response 1-like protein</fullName>
        <shortName>TIR1-like protein</shortName>
    </alternativeName>
</protein>
<reference key="1">
    <citation type="journal article" date="1999" name="Nature">
        <title>Sequence and analysis of chromosome 4 of the plant Arabidopsis thaliana.</title>
        <authorList>
            <person name="Mayer K.F.X."/>
            <person name="Schueller C."/>
            <person name="Wambutt R."/>
            <person name="Murphy G."/>
            <person name="Volckaert G."/>
            <person name="Pohl T."/>
            <person name="Duesterhoeft A."/>
            <person name="Stiekema W."/>
            <person name="Entian K.-D."/>
            <person name="Terryn N."/>
            <person name="Harris B."/>
            <person name="Ansorge W."/>
            <person name="Brandt P."/>
            <person name="Grivell L.A."/>
            <person name="Rieger M."/>
            <person name="Weichselgartner M."/>
            <person name="de Simone V."/>
            <person name="Obermaier B."/>
            <person name="Mache R."/>
            <person name="Mueller M."/>
            <person name="Kreis M."/>
            <person name="Delseny M."/>
            <person name="Puigdomenech P."/>
            <person name="Watson M."/>
            <person name="Schmidtheini T."/>
            <person name="Reichert B."/>
            <person name="Portetelle D."/>
            <person name="Perez-Alonso M."/>
            <person name="Boutry M."/>
            <person name="Bancroft I."/>
            <person name="Vos P."/>
            <person name="Hoheisel J."/>
            <person name="Zimmermann W."/>
            <person name="Wedler H."/>
            <person name="Ridley P."/>
            <person name="Langham S.-A."/>
            <person name="McCullagh B."/>
            <person name="Bilham L."/>
            <person name="Robben J."/>
            <person name="van der Schueren J."/>
            <person name="Grymonprez B."/>
            <person name="Chuang Y.-J."/>
            <person name="Vandenbussche F."/>
            <person name="Braeken M."/>
            <person name="Weltjens I."/>
            <person name="Voet M."/>
            <person name="Bastiaens I."/>
            <person name="Aert R."/>
            <person name="Defoor E."/>
            <person name="Weitzenegger T."/>
            <person name="Bothe G."/>
            <person name="Ramsperger U."/>
            <person name="Hilbert H."/>
            <person name="Braun M."/>
            <person name="Holzer E."/>
            <person name="Brandt A."/>
            <person name="Peters S."/>
            <person name="van Staveren M."/>
            <person name="Dirkse W."/>
            <person name="Mooijman P."/>
            <person name="Klein Lankhorst R."/>
            <person name="Rose M."/>
            <person name="Hauf J."/>
            <person name="Koetter P."/>
            <person name="Berneiser S."/>
            <person name="Hempel S."/>
            <person name="Feldpausch M."/>
            <person name="Lamberth S."/>
            <person name="Van den Daele H."/>
            <person name="De Keyser A."/>
            <person name="Buysshaert C."/>
            <person name="Gielen J."/>
            <person name="Villarroel R."/>
            <person name="De Clercq R."/>
            <person name="van Montagu M."/>
            <person name="Rogers J."/>
            <person name="Cronin A."/>
            <person name="Quail M.A."/>
            <person name="Bray-Allen S."/>
            <person name="Clark L."/>
            <person name="Doggett J."/>
            <person name="Hall S."/>
            <person name="Kay M."/>
            <person name="Lennard N."/>
            <person name="McLay K."/>
            <person name="Mayes R."/>
            <person name="Pettett A."/>
            <person name="Rajandream M.A."/>
            <person name="Lyne M."/>
            <person name="Benes V."/>
            <person name="Rechmann S."/>
            <person name="Borkova D."/>
            <person name="Bloecker H."/>
            <person name="Scharfe M."/>
            <person name="Grimm M."/>
            <person name="Loehnert T.-H."/>
            <person name="Dose S."/>
            <person name="de Haan M."/>
            <person name="Maarse A.C."/>
            <person name="Schaefer M."/>
            <person name="Mueller-Auer S."/>
            <person name="Gabel C."/>
            <person name="Fuchs M."/>
            <person name="Fartmann B."/>
            <person name="Granderath K."/>
            <person name="Dauner D."/>
            <person name="Herzl A."/>
            <person name="Neumann S."/>
            <person name="Argiriou A."/>
            <person name="Vitale D."/>
            <person name="Liguori R."/>
            <person name="Piravandi E."/>
            <person name="Massenet O."/>
            <person name="Quigley F."/>
            <person name="Clabauld G."/>
            <person name="Muendlein A."/>
            <person name="Felber R."/>
            <person name="Schnabl S."/>
            <person name="Hiller R."/>
            <person name="Schmidt W."/>
            <person name="Lecharny A."/>
            <person name="Aubourg S."/>
            <person name="Chefdor F."/>
            <person name="Cooke R."/>
            <person name="Berger C."/>
            <person name="Monfort A."/>
            <person name="Casacuberta E."/>
            <person name="Gibbons T."/>
            <person name="Weber N."/>
            <person name="Vandenbol M."/>
            <person name="Bargues M."/>
            <person name="Terol J."/>
            <person name="Torres A."/>
            <person name="Perez-Perez A."/>
            <person name="Purnelle B."/>
            <person name="Bent E."/>
            <person name="Johnson S."/>
            <person name="Tacon D."/>
            <person name="Jesse T."/>
            <person name="Heijnen L."/>
            <person name="Schwarz S."/>
            <person name="Scholler P."/>
            <person name="Heber S."/>
            <person name="Francs P."/>
            <person name="Bielke C."/>
            <person name="Frishman D."/>
            <person name="Haase D."/>
            <person name="Lemcke K."/>
            <person name="Mewes H.-W."/>
            <person name="Stocker S."/>
            <person name="Zaccaria P."/>
            <person name="Bevan M."/>
            <person name="Wilson R.K."/>
            <person name="de la Bastide M."/>
            <person name="Habermann K."/>
            <person name="Parnell L."/>
            <person name="Dedhia N."/>
            <person name="Gnoj L."/>
            <person name="Schutz K."/>
            <person name="Huang E."/>
            <person name="Spiegel L."/>
            <person name="Sekhon M."/>
            <person name="Murray J."/>
            <person name="Sheet P."/>
            <person name="Cordes M."/>
            <person name="Abu-Threideh J."/>
            <person name="Stoneking T."/>
            <person name="Kalicki J."/>
            <person name="Graves T."/>
            <person name="Harmon G."/>
            <person name="Edwards J."/>
            <person name="Latreille P."/>
            <person name="Courtney L."/>
            <person name="Cloud J."/>
            <person name="Abbott A."/>
            <person name="Scott K."/>
            <person name="Johnson D."/>
            <person name="Minx P."/>
            <person name="Bentley D."/>
            <person name="Fulton B."/>
            <person name="Miller N."/>
            <person name="Greco T."/>
            <person name="Kemp K."/>
            <person name="Kramer J."/>
            <person name="Fulton L."/>
            <person name="Mardis E."/>
            <person name="Dante M."/>
            <person name="Pepin K."/>
            <person name="Hillier L.W."/>
            <person name="Nelson J."/>
            <person name="Spieth J."/>
            <person name="Ryan E."/>
            <person name="Andrews S."/>
            <person name="Geisel C."/>
            <person name="Layman D."/>
            <person name="Du H."/>
            <person name="Ali J."/>
            <person name="Berghoff A."/>
            <person name="Jones K."/>
            <person name="Drone K."/>
            <person name="Cotton M."/>
            <person name="Joshu C."/>
            <person name="Antonoiu B."/>
            <person name="Zidanic M."/>
            <person name="Strong C."/>
            <person name="Sun H."/>
            <person name="Lamar B."/>
            <person name="Yordan C."/>
            <person name="Ma P."/>
            <person name="Zhong J."/>
            <person name="Preston R."/>
            <person name="Vil D."/>
            <person name="Shekher M."/>
            <person name="Matero A."/>
            <person name="Shah R."/>
            <person name="Swaby I.K."/>
            <person name="O'Shaughnessy A."/>
            <person name="Rodriguez M."/>
            <person name="Hoffman J."/>
            <person name="Till S."/>
            <person name="Granat S."/>
            <person name="Shohdy N."/>
            <person name="Hasegawa A."/>
            <person name="Hameed A."/>
            <person name="Lodhi M."/>
            <person name="Johnson A."/>
            <person name="Chen E."/>
            <person name="Marra M.A."/>
            <person name="Martienssen R."/>
            <person name="McCombie W.R."/>
        </authorList>
    </citation>
    <scope>NUCLEOTIDE SEQUENCE [LARGE SCALE GENOMIC DNA]</scope>
    <source>
        <strain>cv. Columbia</strain>
    </source>
</reference>
<reference key="2">
    <citation type="journal article" date="2017" name="Plant J.">
        <title>Araport11: a complete reannotation of the Arabidopsis thaliana reference genome.</title>
        <authorList>
            <person name="Cheng C.Y."/>
            <person name="Krishnakumar V."/>
            <person name="Chan A.P."/>
            <person name="Thibaud-Nissen F."/>
            <person name="Schobel S."/>
            <person name="Town C.D."/>
        </authorList>
    </citation>
    <scope>GENOME REANNOTATION</scope>
    <source>
        <strain>cv. Columbia</strain>
    </source>
</reference>
<reference key="3">
    <citation type="journal article" date="2003" name="Science">
        <title>Empirical analysis of transcriptional activity in the Arabidopsis genome.</title>
        <authorList>
            <person name="Yamada K."/>
            <person name="Lim J."/>
            <person name="Dale J.M."/>
            <person name="Chen H."/>
            <person name="Shinn P."/>
            <person name="Palm C.J."/>
            <person name="Southwick A.M."/>
            <person name="Wu H.C."/>
            <person name="Kim C.J."/>
            <person name="Nguyen M."/>
            <person name="Pham P.K."/>
            <person name="Cheuk R.F."/>
            <person name="Karlin-Newmann G."/>
            <person name="Liu S.X."/>
            <person name="Lam B."/>
            <person name="Sakano H."/>
            <person name="Wu T."/>
            <person name="Yu G."/>
            <person name="Miranda M."/>
            <person name="Quach H.L."/>
            <person name="Tripp M."/>
            <person name="Chang C.H."/>
            <person name="Lee J.M."/>
            <person name="Toriumi M.J."/>
            <person name="Chan M.M."/>
            <person name="Tang C.C."/>
            <person name="Onodera C.S."/>
            <person name="Deng J.M."/>
            <person name="Akiyama K."/>
            <person name="Ansari Y."/>
            <person name="Arakawa T."/>
            <person name="Banh J."/>
            <person name="Banno F."/>
            <person name="Bowser L."/>
            <person name="Brooks S.Y."/>
            <person name="Carninci P."/>
            <person name="Chao Q."/>
            <person name="Choy N."/>
            <person name="Enju A."/>
            <person name="Goldsmith A.D."/>
            <person name="Gurjal M."/>
            <person name="Hansen N.F."/>
            <person name="Hayashizaki Y."/>
            <person name="Johnson-Hopson C."/>
            <person name="Hsuan V.W."/>
            <person name="Iida K."/>
            <person name="Karnes M."/>
            <person name="Khan S."/>
            <person name="Koesema E."/>
            <person name="Ishida J."/>
            <person name="Jiang P.X."/>
            <person name="Jones T."/>
            <person name="Kawai J."/>
            <person name="Kamiya A."/>
            <person name="Meyers C."/>
            <person name="Nakajima M."/>
            <person name="Narusaka M."/>
            <person name="Seki M."/>
            <person name="Sakurai T."/>
            <person name="Satou M."/>
            <person name="Tamse R."/>
            <person name="Vaysberg M."/>
            <person name="Wallender E.K."/>
            <person name="Wong C."/>
            <person name="Yamamura Y."/>
            <person name="Yuan S."/>
            <person name="Shinozaki K."/>
            <person name="Davis R.W."/>
            <person name="Theologis A."/>
            <person name="Ecker J.R."/>
        </authorList>
    </citation>
    <scope>NUCLEOTIDE SEQUENCE [LARGE SCALE MRNA]</scope>
    <source>
        <strain>cv. Columbia</strain>
    </source>
</reference>
<reference key="4">
    <citation type="journal article" date="2009" name="DNA Res.">
        <title>Analysis of multiple occurrences of alternative splicing events in Arabidopsis thaliana using novel sequenced full-length cDNAs.</title>
        <authorList>
            <person name="Iida K."/>
            <person name="Fukami-Kobayashi K."/>
            <person name="Toyoda A."/>
            <person name="Sakaki Y."/>
            <person name="Kobayashi M."/>
            <person name="Seki M."/>
            <person name="Shinozaki K."/>
        </authorList>
    </citation>
    <scope>NUCLEOTIDE SEQUENCE [LARGE SCALE MRNA]</scope>
    <source>
        <strain>cv. Columbia</strain>
    </source>
</reference>
<reference key="5">
    <citation type="journal article" date="2000" name="Trends Plant Sci.">
        <title>F-box proteins in Arabidopsis.</title>
        <authorList>
            <person name="Xiao W."/>
            <person name="Jang J.-C."/>
        </authorList>
    </citation>
    <scope>GENE FAMILY</scope>
    <scope>NOMENCLATURE</scope>
</reference>
<reference key="6">
    <citation type="journal article" date="2002" name="Plant Mol. Biol.">
        <title>Cloning by pathway activation in yeast: identification of an Arabidopsis thaliana F-box protein that can turn on glucose repression.</title>
        <authorList>
            <person name="Thelander M."/>
            <person name="Fredriksson D."/>
            <person name="Schouten J."/>
            <person name="Hoge J.H.C."/>
            <person name="Ronne H."/>
        </authorList>
    </citation>
    <scope>LEUCINE-RICH REPEATS</scope>
</reference>
<sequence length="623" mass="69500">MTEEDSSAKMSEDVEKYLNLNPPCSSSSSSSSAATFTNKSRNFKSSPPPCPDHVLENVLENVLQFLTSRCDRNAVSLVCRSWYRVEAQTRLEVFIGNCYSLSPARLIHRFKRVRSLVLKGKPRFADFNLMPPNWGAQFSPWVAATAKAYPWLEKVHLKRMFVTDDDLALLAESFPGFKELTLVCCEGFGTSGIAIVANKCRQLKVLDLMESEVTDDELDWISCFPEGETHLESLSFDCVESPINFKALEELVVRSPFLKKLRTNRFVSLEELHRLMVRAPQLTSLGTGSFSPDNVPQGEQQPDYAAAFRACKSIVCLSGFREFRPEYLLAISSVCANLTSLNFSYANISPHMLKPIISNCHNIRVFWALDSIRDEGLQAVAATCKELRELRIFPFDPREDSEGPVSGVGLQAISEGCRKLESILYFCQNMTNGAVTAMSENCPQLTVFRLCIMGRHRPDHVTGKPMDDGFGAIVKNCKKLTRLAVSGLLTDEAFSYIGEYGKLIRTLSVAFAGNSDKALRYVLEGCPKLQKLEIRDSPFGDVGLRSGMHRYSNMRFVWLSSCLISRGGCRGVSHALPNVVVEVFGADGDDDEDTVTGDYVETLYLYRSLDGPRKDAPKFVTIL</sequence>
<keyword id="KW-0927">Auxin signaling pathway</keyword>
<keyword id="KW-0539">Nucleus</keyword>
<keyword id="KW-1185">Reference proteome</keyword>
<keyword id="KW-0833">Ubl conjugation pathway</keyword>
<name>FBX14_ARATH</name>
<feature type="chain" id="PRO_0000273545" description="F-box protein FBX14">
    <location>
        <begin position="1"/>
        <end position="623"/>
    </location>
</feature>
<feature type="domain" description="F-box">
    <location>
        <begin position="54"/>
        <end position="97"/>
    </location>
</feature>
<feature type="region of interest" description="Disordered" evidence="2">
    <location>
        <begin position="18"/>
        <end position="48"/>
    </location>
</feature>
<feature type="region of interest" description="Interaction with auxin-responsive proteins" evidence="1">
    <location>
        <begin position="126"/>
        <end position="127"/>
    </location>
</feature>
<feature type="region of interest" description="Interaction with auxin-responsive proteins" evidence="1">
    <location>
        <begin position="394"/>
        <end position="399"/>
    </location>
</feature>
<feature type="region of interest" description="Interaction with auxin-responsive proteins" evidence="1">
    <location>
        <begin position="451"/>
        <end position="455"/>
    </location>
</feature>
<feature type="region of interest" description="Interaction with auxin-responsive proteins" evidence="1">
    <location>
        <begin position="510"/>
        <end position="511"/>
    </location>
</feature>
<feature type="compositionally biased region" description="Polar residues" evidence="2">
    <location>
        <begin position="33"/>
        <end position="45"/>
    </location>
</feature>
<feature type="binding site" evidence="1">
    <location>
        <position position="119"/>
    </location>
    <ligand>
        <name>1D-myo-inositol hexakisphosphate</name>
        <dbReference type="ChEBI" id="CHEBI:58130"/>
    </ligand>
</feature>
<feature type="binding site" evidence="1">
    <location>
        <begin position="158"/>
        <end position="159"/>
    </location>
    <ligand>
        <name>1D-myo-inositol hexakisphosphate</name>
        <dbReference type="ChEBI" id="CHEBI:58130"/>
    </ligand>
</feature>
<feature type="binding site" evidence="1">
    <location>
        <position position="391"/>
    </location>
    <ligand>
        <name>1D-myo-inositol hexakisphosphate</name>
        <dbReference type="ChEBI" id="CHEBI:58130"/>
    </ligand>
</feature>
<feature type="binding site" evidence="1">
    <location>
        <begin position="447"/>
        <end position="449"/>
    </location>
    <ligand>
        <name>1D-myo-inositol hexakisphosphate</name>
        <dbReference type="ChEBI" id="CHEBI:58130"/>
    </ligand>
</feature>
<feature type="binding site" evidence="1">
    <location>
        <position position="482"/>
    </location>
    <ligand>
        <name>1D-myo-inositol hexakisphosphate</name>
        <dbReference type="ChEBI" id="CHEBI:58130"/>
    </ligand>
</feature>
<feature type="binding site" evidence="1">
    <location>
        <begin position="530"/>
        <end position="531"/>
    </location>
    <ligand>
        <name>1D-myo-inositol hexakisphosphate</name>
        <dbReference type="ChEBI" id="CHEBI:58130"/>
    </ligand>
</feature>
<feature type="binding site" evidence="1">
    <location>
        <position position="555"/>
    </location>
    <ligand>
        <name>1D-myo-inositol hexakisphosphate</name>
        <dbReference type="ChEBI" id="CHEBI:58130"/>
    </ligand>
</feature>
<feature type="site" description="Interaction with auxin-responsive proteins" evidence="1">
    <location>
        <position position="210"/>
    </location>
</feature>
<feature type="site" description="Interaction with auxin-responsive proteins" evidence="1">
    <location>
        <position position="426"/>
    </location>
</feature>
<feature type="site" description="Interaction with auxin-responsive proteins" evidence="1">
    <location>
        <position position="535"/>
    </location>
</feature>
<gene>
    <name type="primary">FBX14</name>
    <name type="ordered locus">At4g24390</name>
    <name type="ORF">T22A6.220</name>
</gene>